<name>EFP_THIDA</name>
<organism>
    <name type="scientific">Thiobacillus denitrificans (strain ATCC 25259 / T1)</name>
    <dbReference type="NCBI Taxonomy" id="292415"/>
    <lineage>
        <taxon>Bacteria</taxon>
        <taxon>Pseudomonadati</taxon>
        <taxon>Pseudomonadota</taxon>
        <taxon>Betaproteobacteria</taxon>
        <taxon>Nitrosomonadales</taxon>
        <taxon>Thiobacillaceae</taxon>
        <taxon>Thiobacillus</taxon>
    </lineage>
</organism>
<feature type="chain" id="PRO_1000010892" description="Elongation factor P">
    <location>
        <begin position="1"/>
        <end position="186"/>
    </location>
</feature>
<reference key="1">
    <citation type="journal article" date="2006" name="J. Bacteriol.">
        <title>The genome sequence of the obligately chemolithoautotrophic, facultatively anaerobic bacterium Thiobacillus denitrificans.</title>
        <authorList>
            <person name="Beller H.R."/>
            <person name="Chain P.S."/>
            <person name="Letain T.E."/>
            <person name="Chakicherla A."/>
            <person name="Larimer F.W."/>
            <person name="Richardson P.M."/>
            <person name="Coleman M.A."/>
            <person name="Wood A.P."/>
            <person name="Kelly D.P."/>
        </authorList>
    </citation>
    <scope>NUCLEOTIDE SEQUENCE [LARGE SCALE GENOMIC DNA]</scope>
    <source>
        <strain>ATCC 25259 / T1</strain>
    </source>
</reference>
<gene>
    <name evidence="1" type="primary">efp</name>
    <name type="ordered locus">Tbd_0857</name>
</gene>
<dbReference type="EMBL" id="CP000116">
    <property type="protein sequence ID" value="AAZ96810.1"/>
    <property type="molecule type" value="Genomic_DNA"/>
</dbReference>
<dbReference type="RefSeq" id="WP_011311369.1">
    <property type="nucleotide sequence ID" value="NC_007404.1"/>
</dbReference>
<dbReference type="SMR" id="Q3SKH1"/>
<dbReference type="STRING" id="292415.Tbd_0857"/>
<dbReference type="KEGG" id="tbd:Tbd_0857"/>
<dbReference type="eggNOG" id="COG0231">
    <property type="taxonomic scope" value="Bacteria"/>
</dbReference>
<dbReference type="HOGENOM" id="CLU_074944_2_1_4"/>
<dbReference type="OrthoDB" id="9801844at2"/>
<dbReference type="UniPathway" id="UPA00345"/>
<dbReference type="Proteomes" id="UP000008291">
    <property type="component" value="Chromosome"/>
</dbReference>
<dbReference type="GO" id="GO:0005737">
    <property type="term" value="C:cytoplasm"/>
    <property type="evidence" value="ECO:0007669"/>
    <property type="project" value="UniProtKB-SubCell"/>
</dbReference>
<dbReference type="GO" id="GO:0003746">
    <property type="term" value="F:translation elongation factor activity"/>
    <property type="evidence" value="ECO:0007669"/>
    <property type="project" value="UniProtKB-UniRule"/>
</dbReference>
<dbReference type="GO" id="GO:0043043">
    <property type="term" value="P:peptide biosynthetic process"/>
    <property type="evidence" value="ECO:0007669"/>
    <property type="project" value="InterPro"/>
</dbReference>
<dbReference type="CDD" id="cd04470">
    <property type="entry name" value="S1_EF-P_repeat_1"/>
    <property type="match status" value="1"/>
</dbReference>
<dbReference type="FunFam" id="2.30.30.30:FF:000003">
    <property type="entry name" value="Elongation factor P"/>
    <property type="match status" value="1"/>
</dbReference>
<dbReference type="FunFam" id="2.40.50.140:FF:000004">
    <property type="entry name" value="Elongation factor P"/>
    <property type="match status" value="1"/>
</dbReference>
<dbReference type="FunFam" id="2.40.50.140:FF:000009">
    <property type="entry name" value="Elongation factor P"/>
    <property type="match status" value="1"/>
</dbReference>
<dbReference type="Gene3D" id="2.30.30.30">
    <property type="match status" value="1"/>
</dbReference>
<dbReference type="Gene3D" id="2.40.50.140">
    <property type="entry name" value="Nucleic acid-binding proteins"/>
    <property type="match status" value="2"/>
</dbReference>
<dbReference type="HAMAP" id="MF_00141">
    <property type="entry name" value="EF_P"/>
    <property type="match status" value="1"/>
</dbReference>
<dbReference type="InterPro" id="IPR015365">
    <property type="entry name" value="Elong-fact-P_C"/>
</dbReference>
<dbReference type="InterPro" id="IPR012340">
    <property type="entry name" value="NA-bd_OB-fold"/>
</dbReference>
<dbReference type="InterPro" id="IPR014722">
    <property type="entry name" value="Rib_uL2_dom2"/>
</dbReference>
<dbReference type="InterPro" id="IPR020599">
    <property type="entry name" value="Transl_elong_fac_P/YeiP"/>
</dbReference>
<dbReference type="InterPro" id="IPR013185">
    <property type="entry name" value="Transl_elong_KOW-like"/>
</dbReference>
<dbReference type="InterPro" id="IPR001059">
    <property type="entry name" value="Transl_elong_P/YeiP_cen"/>
</dbReference>
<dbReference type="InterPro" id="IPR011768">
    <property type="entry name" value="Transl_elongation_fac_P"/>
</dbReference>
<dbReference type="InterPro" id="IPR008991">
    <property type="entry name" value="Translation_prot_SH3-like_sf"/>
</dbReference>
<dbReference type="NCBIfam" id="TIGR00038">
    <property type="entry name" value="efp"/>
    <property type="match status" value="1"/>
</dbReference>
<dbReference type="NCBIfam" id="NF001810">
    <property type="entry name" value="PRK00529.1"/>
    <property type="match status" value="1"/>
</dbReference>
<dbReference type="PANTHER" id="PTHR30053">
    <property type="entry name" value="ELONGATION FACTOR P"/>
    <property type="match status" value="1"/>
</dbReference>
<dbReference type="PANTHER" id="PTHR30053:SF12">
    <property type="entry name" value="ELONGATION FACTOR P (EF-P) FAMILY PROTEIN"/>
    <property type="match status" value="1"/>
</dbReference>
<dbReference type="Pfam" id="PF01132">
    <property type="entry name" value="EFP"/>
    <property type="match status" value="1"/>
</dbReference>
<dbReference type="Pfam" id="PF08207">
    <property type="entry name" value="EFP_N"/>
    <property type="match status" value="1"/>
</dbReference>
<dbReference type="Pfam" id="PF09285">
    <property type="entry name" value="Elong-fact-P_C"/>
    <property type="match status" value="1"/>
</dbReference>
<dbReference type="PIRSF" id="PIRSF005901">
    <property type="entry name" value="EF-P"/>
    <property type="match status" value="1"/>
</dbReference>
<dbReference type="SMART" id="SM01185">
    <property type="entry name" value="EFP"/>
    <property type="match status" value="1"/>
</dbReference>
<dbReference type="SMART" id="SM00841">
    <property type="entry name" value="Elong-fact-P_C"/>
    <property type="match status" value="1"/>
</dbReference>
<dbReference type="SUPFAM" id="SSF50249">
    <property type="entry name" value="Nucleic acid-binding proteins"/>
    <property type="match status" value="2"/>
</dbReference>
<dbReference type="SUPFAM" id="SSF50104">
    <property type="entry name" value="Translation proteins SH3-like domain"/>
    <property type="match status" value="1"/>
</dbReference>
<protein>
    <recommendedName>
        <fullName evidence="1">Elongation factor P</fullName>
        <shortName evidence="1">EF-P</shortName>
    </recommendedName>
</protein>
<keyword id="KW-0963">Cytoplasm</keyword>
<keyword id="KW-0251">Elongation factor</keyword>
<keyword id="KW-0648">Protein biosynthesis</keyword>
<keyword id="KW-1185">Reference proteome</keyword>
<comment type="function">
    <text evidence="1">Involved in peptide bond synthesis. Stimulates efficient translation and peptide-bond synthesis on native or reconstituted 70S ribosomes in vitro. Probably functions indirectly by altering the affinity of the ribosome for aminoacyl-tRNA, thus increasing their reactivity as acceptors for peptidyl transferase.</text>
</comment>
<comment type="pathway">
    <text evidence="1">Protein biosynthesis; polypeptide chain elongation.</text>
</comment>
<comment type="subcellular location">
    <subcellularLocation>
        <location evidence="1">Cytoplasm</location>
    </subcellularLocation>
</comment>
<comment type="similarity">
    <text evidence="1">Belongs to the elongation factor P family.</text>
</comment>
<evidence type="ECO:0000255" key="1">
    <source>
        <dbReference type="HAMAP-Rule" id="MF_00141"/>
    </source>
</evidence>
<sequence>MKIAQELRAGNVVMIGKDPMVVQKAEFSKSGRNASVVKMKLKNLLTGAGMESVYRADDKFDTVTLDRKECTYSYFADPLYVFMDSDYNQYEVEGDNLGDALNYLDDGMPVEVVFYEGKAISVEMPTTVIREVEYTEPAVRGDTSGKVMKPARIKPTGFELPVAAFVEIGDMIEIDTRTNEFKRRAN</sequence>
<proteinExistence type="inferred from homology"/>
<accession>Q3SKH1</accession>